<sequence>MIRISDAAQAHFAKLLANQEEGTQIRVFVINPGTPNAECGVSYCPPDAVEATDTALKFDLLTAYVDELSAPYLEDAEIDFVTDQLGSQLTLKAPNAKMRKVADDAPLMERVEYMLQSQINPQLAGHGGRVSLMEITEDGYAILQFGGGCNGCSMVDVTLKEGIEKQLLNEFPELKGVRDLTEHQRGEHSYY</sequence>
<accession>Q3YWL1</accession>
<feature type="chain" id="PRO_0000268245" description="Fe/S biogenesis protein NfuA">
    <location>
        <begin position="1"/>
        <end position="191"/>
    </location>
</feature>
<feature type="binding site" evidence="1">
    <location>
        <position position="149"/>
    </location>
    <ligand>
        <name>[4Fe-4S] cluster</name>
        <dbReference type="ChEBI" id="CHEBI:49883"/>
    </ligand>
</feature>
<feature type="binding site" evidence="1">
    <location>
        <position position="152"/>
    </location>
    <ligand>
        <name>[4Fe-4S] cluster</name>
        <dbReference type="ChEBI" id="CHEBI:49883"/>
    </ligand>
</feature>
<keyword id="KW-0004">4Fe-4S</keyword>
<keyword id="KW-0408">Iron</keyword>
<keyword id="KW-0411">Iron-sulfur</keyword>
<keyword id="KW-0479">Metal-binding</keyword>
<keyword id="KW-1185">Reference proteome</keyword>
<dbReference type="EMBL" id="CP000038">
    <property type="protein sequence ID" value="AAZ90101.1"/>
    <property type="molecule type" value="Genomic_DNA"/>
</dbReference>
<dbReference type="RefSeq" id="WP_000619389.1">
    <property type="nucleotide sequence ID" value="NC_007384.1"/>
</dbReference>
<dbReference type="SMR" id="Q3YWL1"/>
<dbReference type="GeneID" id="93778582"/>
<dbReference type="KEGG" id="ssn:SSON_3546"/>
<dbReference type="HOGENOM" id="CLU_094569_0_0_6"/>
<dbReference type="Proteomes" id="UP000002529">
    <property type="component" value="Chromosome"/>
</dbReference>
<dbReference type="GO" id="GO:0051539">
    <property type="term" value="F:4 iron, 4 sulfur cluster binding"/>
    <property type="evidence" value="ECO:0007669"/>
    <property type="project" value="UniProtKB-UniRule"/>
</dbReference>
<dbReference type="GO" id="GO:0005506">
    <property type="term" value="F:iron ion binding"/>
    <property type="evidence" value="ECO:0007669"/>
    <property type="project" value="InterPro"/>
</dbReference>
<dbReference type="GO" id="GO:0016226">
    <property type="term" value="P:iron-sulfur cluster assembly"/>
    <property type="evidence" value="ECO:0007669"/>
    <property type="project" value="UniProtKB-UniRule"/>
</dbReference>
<dbReference type="GO" id="GO:0051604">
    <property type="term" value="P:protein maturation"/>
    <property type="evidence" value="ECO:0007669"/>
    <property type="project" value="UniProtKB-UniRule"/>
</dbReference>
<dbReference type="FunFam" id="2.60.300.12:FF:000004">
    <property type="entry name" value="Fe/S biogenesis protein NfuA"/>
    <property type="match status" value="1"/>
</dbReference>
<dbReference type="FunFam" id="3.30.300.130:FF:000002">
    <property type="entry name" value="Fe/S biogenesis protein NfuA"/>
    <property type="match status" value="1"/>
</dbReference>
<dbReference type="Gene3D" id="3.30.300.130">
    <property type="entry name" value="Fe-S cluster assembly (FSCA)"/>
    <property type="match status" value="1"/>
</dbReference>
<dbReference type="Gene3D" id="2.60.300.12">
    <property type="entry name" value="HesB-like domain"/>
    <property type="match status" value="1"/>
</dbReference>
<dbReference type="HAMAP" id="MF_01637">
    <property type="entry name" value="Fe_S_biogen_NfuA"/>
    <property type="match status" value="1"/>
</dbReference>
<dbReference type="InterPro" id="IPR017726">
    <property type="entry name" value="Fe/S_biogenesis_protein_NfuA"/>
</dbReference>
<dbReference type="InterPro" id="IPR000361">
    <property type="entry name" value="FeS_biogenesis"/>
</dbReference>
<dbReference type="InterPro" id="IPR034904">
    <property type="entry name" value="FSCA_dom_sf"/>
</dbReference>
<dbReference type="InterPro" id="IPR035903">
    <property type="entry name" value="HesB-like_dom_sf"/>
</dbReference>
<dbReference type="InterPro" id="IPR001075">
    <property type="entry name" value="NIF_FeS_clus_asmbl_NifU_C"/>
</dbReference>
<dbReference type="NCBIfam" id="NF008392">
    <property type="entry name" value="PRK11190.1"/>
    <property type="match status" value="1"/>
</dbReference>
<dbReference type="NCBIfam" id="TIGR03341">
    <property type="entry name" value="YhgI_GntY"/>
    <property type="match status" value="1"/>
</dbReference>
<dbReference type="PANTHER" id="PTHR11178:SF51">
    <property type="entry name" value="FE_S BIOGENESIS PROTEIN NFUA"/>
    <property type="match status" value="1"/>
</dbReference>
<dbReference type="PANTHER" id="PTHR11178">
    <property type="entry name" value="IRON-SULFUR CLUSTER SCAFFOLD PROTEIN NFU-RELATED"/>
    <property type="match status" value="1"/>
</dbReference>
<dbReference type="Pfam" id="PF01521">
    <property type="entry name" value="Fe-S_biosyn"/>
    <property type="match status" value="1"/>
</dbReference>
<dbReference type="Pfam" id="PF01106">
    <property type="entry name" value="NifU"/>
    <property type="match status" value="1"/>
</dbReference>
<dbReference type="SUPFAM" id="SSF117916">
    <property type="entry name" value="Fe-S cluster assembly (FSCA) domain-like"/>
    <property type="match status" value="1"/>
</dbReference>
<dbReference type="SUPFAM" id="SSF89360">
    <property type="entry name" value="HesB-like domain"/>
    <property type="match status" value="1"/>
</dbReference>
<protein>
    <recommendedName>
        <fullName evidence="1">Fe/S biogenesis protein NfuA</fullName>
    </recommendedName>
</protein>
<name>NFUA_SHISS</name>
<organism>
    <name type="scientific">Shigella sonnei (strain Ss046)</name>
    <dbReference type="NCBI Taxonomy" id="300269"/>
    <lineage>
        <taxon>Bacteria</taxon>
        <taxon>Pseudomonadati</taxon>
        <taxon>Pseudomonadota</taxon>
        <taxon>Gammaproteobacteria</taxon>
        <taxon>Enterobacterales</taxon>
        <taxon>Enterobacteriaceae</taxon>
        <taxon>Shigella</taxon>
    </lineage>
</organism>
<gene>
    <name evidence="1" type="primary">nfuA</name>
    <name type="synonym">yhgI</name>
    <name type="ordered locus">SSON_3546</name>
</gene>
<comment type="function">
    <text evidence="1">Involved in iron-sulfur cluster biogenesis. Binds a 4Fe-4S cluster, can transfer this cluster to apoproteins, and thereby intervenes in the maturation of Fe/S proteins. Could also act as a scaffold/chaperone for damaged Fe/S proteins.</text>
</comment>
<comment type="cofactor">
    <cofactor evidence="1">
        <name>[4Fe-4S] cluster</name>
        <dbReference type="ChEBI" id="CHEBI:49883"/>
    </cofactor>
    <text evidence="1">Binds 1 [4Fe-4S] cluster per subunit. The cluster is presumably bound at the interface of two monomers.</text>
</comment>
<comment type="subunit">
    <text evidence="1">Homodimer.</text>
</comment>
<comment type="similarity">
    <text evidence="1">Belongs to the NfuA family.</text>
</comment>
<proteinExistence type="inferred from homology"/>
<evidence type="ECO:0000255" key="1">
    <source>
        <dbReference type="HAMAP-Rule" id="MF_01637"/>
    </source>
</evidence>
<reference key="1">
    <citation type="journal article" date="2005" name="Nucleic Acids Res.">
        <title>Genome dynamics and diversity of Shigella species, the etiologic agents of bacillary dysentery.</title>
        <authorList>
            <person name="Yang F."/>
            <person name="Yang J."/>
            <person name="Zhang X."/>
            <person name="Chen L."/>
            <person name="Jiang Y."/>
            <person name="Yan Y."/>
            <person name="Tang X."/>
            <person name="Wang J."/>
            <person name="Xiong Z."/>
            <person name="Dong J."/>
            <person name="Xue Y."/>
            <person name="Zhu Y."/>
            <person name="Xu X."/>
            <person name="Sun L."/>
            <person name="Chen S."/>
            <person name="Nie H."/>
            <person name="Peng J."/>
            <person name="Xu J."/>
            <person name="Wang Y."/>
            <person name="Yuan Z."/>
            <person name="Wen Y."/>
            <person name="Yao Z."/>
            <person name="Shen Y."/>
            <person name="Qiang B."/>
            <person name="Hou Y."/>
            <person name="Yu J."/>
            <person name="Jin Q."/>
        </authorList>
    </citation>
    <scope>NUCLEOTIDE SEQUENCE [LARGE SCALE GENOMIC DNA]</scope>
    <source>
        <strain>Ss046</strain>
    </source>
</reference>